<name>THIM_LEPIC</name>
<proteinExistence type="inferred from homology"/>
<keyword id="KW-0067">ATP-binding</keyword>
<keyword id="KW-0418">Kinase</keyword>
<keyword id="KW-0460">Magnesium</keyword>
<keyword id="KW-0479">Metal-binding</keyword>
<keyword id="KW-0547">Nucleotide-binding</keyword>
<keyword id="KW-0784">Thiamine biosynthesis</keyword>
<keyword id="KW-0808">Transferase</keyword>
<feature type="chain" id="PRO_0000156941" description="Hydroxyethylthiazole kinase">
    <location>
        <begin position="1"/>
        <end position="265"/>
    </location>
</feature>
<feature type="binding site" evidence="1">
    <location>
        <position position="55"/>
    </location>
    <ligand>
        <name>substrate</name>
    </ligand>
</feature>
<feature type="binding site" evidence="1">
    <location>
        <position position="130"/>
    </location>
    <ligand>
        <name>ATP</name>
        <dbReference type="ChEBI" id="CHEBI:30616"/>
    </ligand>
</feature>
<feature type="binding site" evidence="1">
    <location>
        <position position="176"/>
    </location>
    <ligand>
        <name>ATP</name>
        <dbReference type="ChEBI" id="CHEBI:30616"/>
    </ligand>
</feature>
<feature type="binding site" evidence="1">
    <location>
        <position position="203"/>
    </location>
    <ligand>
        <name>substrate</name>
    </ligand>
</feature>
<sequence>MSKTTIIERIWPAKEIIEDLSELRKQSPLTHVITNIVVTNWTANVLLAIGSSPAMVIAKEEAGEFAKIASGLLINIGTVTSNDAITMKIAAEAAHQAKIPWVLDPVAVGALGFRTELAKELLNFKPTVIRGNASEILALAGTDGGGKGVDSTALSSDALPLAQMLAEKTGAVIAISGEIDYVTNGKETISISGGDPIMTKVTGVGCSLGGVIASFLGVQKDPLRATATASAVFAIAGTRSAKISKGSGSFAVNFLDQLNLLSTEK</sequence>
<protein>
    <recommendedName>
        <fullName evidence="1">Hydroxyethylthiazole kinase</fullName>
        <ecNumber evidence="1">2.7.1.50</ecNumber>
    </recommendedName>
    <alternativeName>
        <fullName evidence="1">4-methyl-5-beta-hydroxyethylthiazole kinase</fullName>
        <shortName evidence="1">TH kinase</shortName>
        <shortName evidence="1">Thz kinase</shortName>
    </alternativeName>
</protein>
<reference key="1">
    <citation type="journal article" date="2004" name="J. Bacteriol.">
        <title>Comparative genomics of two Leptospira interrogans serovars reveals novel insights into physiology and pathogenesis.</title>
        <authorList>
            <person name="Nascimento A.L.T.O."/>
            <person name="Ko A.I."/>
            <person name="Martins E.A.L."/>
            <person name="Monteiro-Vitorello C.B."/>
            <person name="Ho P.L."/>
            <person name="Haake D.A."/>
            <person name="Verjovski-Almeida S."/>
            <person name="Hartskeerl R.A."/>
            <person name="Marques M.V."/>
            <person name="Oliveira M.C."/>
            <person name="Menck C.F.M."/>
            <person name="Leite L.C.C."/>
            <person name="Carrer H."/>
            <person name="Coutinho L.L."/>
            <person name="Degrave W.M."/>
            <person name="Dellagostin O.A."/>
            <person name="El-Dorry H."/>
            <person name="Ferro E.S."/>
            <person name="Ferro M.I.T."/>
            <person name="Furlan L.R."/>
            <person name="Gamberini M."/>
            <person name="Giglioti E.A."/>
            <person name="Goes-Neto A."/>
            <person name="Goldman G.H."/>
            <person name="Goldman M.H.S."/>
            <person name="Harakava R."/>
            <person name="Jeronimo S.M.B."/>
            <person name="Junqueira-de-Azevedo I.L.M."/>
            <person name="Kimura E.T."/>
            <person name="Kuramae E.E."/>
            <person name="Lemos E.G.M."/>
            <person name="Lemos M.V.F."/>
            <person name="Marino C.L."/>
            <person name="Nunes L.R."/>
            <person name="de Oliveira R.C."/>
            <person name="Pereira G.G."/>
            <person name="Reis M.S."/>
            <person name="Schriefer A."/>
            <person name="Siqueira W.J."/>
            <person name="Sommer P."/>
            <person name="Tsai S.M."/>
            <person name="Simpson A.J.G."/>
            <person name="Ferro J.A."/>
            <person name="Camargo L.E.A."/>
            <person name="Kitajima J.P."/>
            <person name="Setubal J.C."/>
            <person name="Van Sluys M.A."/>
        </authorList>
    </citation>
    <scope>NUCLEOTIDE SEQUENCE [LARGE SCALE GENOMIC DNA]</scope>
    <source>
        <strain>Fiocruz L1-130</strain>
    </source>
</reference>
<comment type="function">
    <text evidence="1">Catalyzes the phosphorylation of the hydroxyl group of 4-methyl-5-beta-hydroxyethylthiazole (THZ).</text>
</comment>
<comment type="catalytic activity">
    <reaction evidence="1">
        <text>5-(2-hydroxyethyl)-4-methylthiazole + ATP = 4-methyl-5-(2-phosphooxyethyl)-thiazole + ADP + H(+)</text>
        <dbReference type="Rhea" id="RHEA:24212"/>
        <dbReference type="ChEBI" id="CHEBI:15378"/>
        <dbReference type="ChEBI" id="CHEBI:17957"/>
        <dbReference type="ChEBI" id="CHEBI:30616"/>
        <dbReference type="ChEBI" id="CHEBI:58296"/>
        <dbReference type="ChEBI" id="CHEBI:456216"/>
        <dbReference type="EC" id="2.7.1.50"/>
    </reaction>
</comment>
<comment type="cofactor">
    <cofactor evidence="1">
        <name>Mg(2+)</name>
        <dbReference type="ChEBI" id="CHEBI:18420"/>
    </cofactor>
</comment>
<comment type="pathway">
    <text evidence="1">Cofactor biosynthesis; thiamine diphosphate biosynthesis; 4-methyl-5-(2-phosphoethyl)-thiazole from 5-(2-hydroxyethyl)-4-methylthiazole: step 1/1.</text>
</comment>
<comment type="similarity">
    <text evidence="1">Belongs to the Thz kinase family.</text>
</comment>
<accession>Q72U64</accession>
<organism>
    <name type="scientific">Leptospira interrogans serogroup Icterohaemorrhagiae serovar copenhageni (strain Fiocruz L1-130)</name>
    <dbReference type="NCBI Taxonomy" id="267671"/>
    <lineage>
        <taxon>Bacteria</taxon>
        <taxon>Pseudomonadati</taxon>
        <taxon>Spirochaetota</taxon>
        <taxon>Spirochaetia</taxon>
        <taxon>Leptospirales</taxon>
        <taxon>Leptospiraceae</taxon>
        <taxon>Leptospira</taxon>
    </lineage>
</organism>
<dbReference type="EC" id="2.7.1.50" evidence="1"/>
<dbReference type="EMBL" id="AE016823">
    <property type="protein sequence ID" value="AAS69414.1"/>
    <property type="molecule type" value="Genomic_DNA"/>
</dbReference>
<dbReference type="RefSeq" id="WP_000047876.1">
    <property type="nucleotide sequence ID" value="NC_005823.1"/>
</dbReference>
<dbReference type="SMR" id="Q72U64"/>
<dbReference type="GeneID" id="61144137"/>
<dbReference type="KEGG" id="lic:LIC_10800"/>
<dbReference type="HOGENOM" id="CLU_019943_0_1_12"/>
<dbReference type="UniPathway" id="UPA00060">
    <property type="reaction ID" value="UER00139"/>
</dbReference>
<dbReference type="Proteomes" id="UP000007037">
    <property type="component" value="Chromosome I"/>
</dbReference>
<dbReference type="GO" id="GO:0005524">
    <property type="term" value="F:ATP binding"/>
    <property type="evidence" value="ECO:0007669"/>
    <property type="project" value="UniProtKB-UniRule"/>
</dbReference>
<dbReference type="GO" id="GO:0004417">
    <property type="term" value="F:hydroxyethylthiazole kinase activity"/>
    <property type="evidence" value="ECO:0007669"/>
    <property type="project" value="UniProtKB-UniRule"/>
</dbReference>
<dbReference type="GO" id="GO:0000287">
    <property type="term" value="F:magnesium ion binding"/>
    <property type="evidence" value="ECO:0007669"/>
    <property type="project" value="UniProtKB-UniRule"/>
</dbReference>
<dbReference type="GO" id="GO:0009228">
    <property type="term" value="P:thiamine biosynthetic process"/>
    <property type="evidence" value="ECO:0007669"/>
    <property type="project" value="UniProtKB-KW"/>
</dbReference>
<dbReference type="GO" id="GO:0009229">
    <property type="term" value="P:thiamine diphosphate biosynthetic process"/>
    <property type="evidence" value="ECO:0007669"/>
    <property type="project" value="UniProtKB-UniRule"/>
</dbReference>
<dbReference type="CDD" id="cd01170">
    <property type="entry name" value="THZ_kinase"/>
    <property type="match status" value="1"/>
</dbReference>
<dbReference type="Gene3D" id="3.40.1190.20">
    <property type="match status" value="1"/>
</dbReference>
<dbReference type="HAMAP" id="MF_00228">
    <property type="entry name" value="Thz_kinase"/>
    <property type="match status" value="1"/>
</dbReference>
<dbReference type="InterPro" id="IPR000417">
    <property type="entry name" value="Hyethyz_kinase"/>
</dbReference>
<dbReference type="InterPro" id="IPR029056">
    <property type="entry name" value="Ribokinase-like"/>
</dbReference>
<dbReference type="NCBIfam" id="NF006830">
    <property type="entry name" value="PRK09355.1"/>
    <property type="match status" value="1"/>
</dbReference>
<dbReference type="NCBIfam" id="TIGR00694">
    <property type="entry name" value="thiM"/>
    <property type="match status" value="1"/>
</dbReference>
<dbReference type="Pfam" id="PF02110">
    <property type="entry name" value="HK"/>
    <property type="match status" value="1"/>
</dbReference>
<dbReference type="PIRSF" id="PIRSF000513">
    <property type="entry name" value="Thz_kinase"/>
    <property type="match status" value="1"/>
</dbReference>
<dbReference type="PRINTS" id="PR01099">
    <property type="entry name" value="HYETHTZKNASE"/>
</dbReference>
<dbReference type="SUPFAM" id="SSF53613">
    <property type="entry name" value="Ribokinase-like"/>
    <property type="match status" value="1"/>
</dbReference>
<evidence type="ECO:0000255" key="1">
    <source>
        <dbReference type="HAMAP-Rule" id="MF_00228"/>
    </source>
</evidence>
<gene>
    <name evidence="1" type="primary">thiM</name>
    <name type="ordered locus">LIC_10800</name>
</gene>